<protein>
    <recommendedName>
        <fullName evidence="3">Large ribosomal subunit protein eL33</fullName>
    </recommendedName>
    <alternativeName>
        <fullName>60S ribosomal protein L35a</fullName>
    </alternativeName>
</protein>
<keyword id="KW-0007">Acetylation</keyword>
<keyword id="KW-0963">Cytoplasm</keyword>
<keyword id="KW-1185">Reference proteome</keyword>
<keyword id="KW-0687">Ribonucleoprotein</keyword>
<keyword id="KW-0689">Ribosomal protein</keyword>
<keyword id="KW-0694">RNA-binding</keyword>
<keyword id="KW-0820">tRNA-binding</keyword>
<evidence type="ECO:0000250" key="1">
    <source>
        <dbReference type="UniProtKB" id="O55142"/>
    </source>
</evidence>
<evidence type="ECO:0000250" key="2">
    <source>
        <dbReference type="UniProtKB" id="P18077"/>
    </source>
</evidence>
<evidence type="ECO:0000305" key="3"/>
<reference key="1">
    <citation type="submission" date="2005-01" db="EMBL/GenBank/DDBJ databases">
        <title>Analysis of sequences obtained from constructed full-length bovine cDNA libraries.</title>
        <authorList>
            <person name="Yu J."/>
            <person name="Meng Y."/>
            <person name="Wang Z."/>
            <person name="Hansen C."/>
            <person name="Li C."/>
            <person name="Moore S.S."/>
        </authorList>
    </citation>
    <scope>NUCLEOTIDE SEQUENCE [LARGE SCALE MRNA]</scope>
    <source>
        <tissue>Lymphoid epithelium</tissue>
    </source>
</reference>
<reference key="2">
    <citation type="submission" date="2006-01" db="EMBL/GenBank/DDBJ databases">
        <authorList>
            <consortium name="NIH - Mammalian Gene Collection (MGC) project"/>
        </authorList>
    </citation>
    <scope>NUCLEOTIDE SEQUENCE [LARGE SCALE MRNA]</scope>
    <source>
        <strain>Hereford</strain>
        <tissue>Testis</tissue>
    </source>
</reference>
<sequence length="110" mass="12552">MSGRLWSKAIFAGYKRGLRNQREHTALLKIEGVYARDETEFYLGKRCAYVYKAKNNTVTPGGKPNKTRVIWGKITRAHGNSGMVRAKFRSNLPAKAIGHRIRVMLYPSRI</sequence>
<organism>
    <name type="scientific">Bos taurus</name>
    <name type="common">Bovine</name>
    <dbReference type="NCBI Taxonomy" id="9913"/>
    <lineage>
        <taxon>Eukaryota</taxon>
        <taxon>Metazoa</taxon>
        <taxon>Chordata</taxon>
        <taxon>Craniata</taxon>
        <taxon>Vertebrata</taxon>
        <taxon>Euteleostomi</taxon>
        <taxon>Mammalia</taxon>
        <taxon>Eutheria</taxon>
        <taxon>Laurasiatheria</taxon>
        <taxon>Artiodactyla</taxon>
        <taxon>Ruminantia</taxon>
        <taxon>Pecora</taxon>
        <taxon>Bovidae</taxon>
        <taxon>Bovinae</taxon>
        <taxon>Bos</taxon>
    </lineage>
</organism>
<feature type="chain" id="PRO_0000240151" description="Large ribosomal subunit protein eL33">
    <location>
        <begin position="1"/>
        <end position="110"/>
    </location>
</feature>
<feature type="modified residue" description="N6-acetyllysine" evidence="2">
    <location>
        <position position="8"/>
    </location>
</feature>
<feature type="modified residue" description="N6-acetyllysine; alternate" evidence="1">
    <location>
        <position position="63"/>
    </location>
</feature>
<feature type="modified residue" description="N6-succinyllysine; alternate" evidence="1">
    <location>
        <position position="63"/>
    </location>
</feature>
<dbReference type="EMBL" id="AY911347">
    <property type="protein sequence ID" value="AAW82114.1"/>
    <property type="molecule type" value="mRNA"/>
</dbReference>
<dbReference type="EMBL" id="BC111654">
    <property type="protein sequence ID" value="AAI11655.1"/>
    <property type="molecule type" value="mRNA"/>
</dbReference>
<dbReference type="RefSeq" id="NP_001020492.1">
    <property type="nucleotide sequence ID" value="NM_001025321.3"/>
</dbReference>
<dbReference type="RefSeq" id="XP_005201446.1">
    <property type="nucleotide sequence ID" value="XM_005201389.3"/>
</dbReference>
<dbReference type="RefSeq" id="XP_005201447.1">
    <property type="nucleotide sequence ID" value="XM_005201390.2"/>
</dbReference>
<dbReference type="RefSeq" id="XP_024855945.1">
    <property type="nucleotide sequence ID" value="XM_025000177.2"/>
</dbReference>
<dbReference type="RefSeq" id="XP_059748727.1">
    <property type="nucleotide sequence ID" value="XM_059892744.1"/>
</dbReference>
<dbReference type="SMR" id="Q56JY1"/>
<dbReference type="FunCoup" id="Q56JY1">
    <property type="interactions" value="1354"/>
</dbReference>
<dbReference type="STRING" id="9913.ENSBTAP00000050006"/>
<dbReference type="PaxDb" id="9913-ENSBTAP00000018888"/>
<dbReference type="PeptideAtlas" id="Q56JY1"/>
<dbReference type="Ensembl" id="ENSBTAT00000018888.5">
    <property type="protein sequence ID" value="ENSBTAP00000018888.3"/>
    <property type="gene ID" value="ENSBTAG00000014208.5"/>
</dbReference>
<dbReference type="GeneID" id="506768"/>
<dbReference type="KEGG" id="bta:506768"/>
<dbReference type="CTD" id="6165"/>
<dbReference type="VEuPathDB" id="HostDB:ENSBTAG00000014208"/>
<dbReference type="VGNC" id="VGNC:53601">
    <property type="gene designation" value="RPL35A"/>
</dbReference>
<dbReference type="eggNOG" id="KOG0887">
    <property type="taxonomic scope" value="Eukaryota"/>
</dbReference>
<dbReference type="GeneTree" id="ENSGT00390000016972"/>
<dbReference type="HOGENOM" id="CLU_100745_5_0_1"/>
<dbReference type="InParanoid" id="Q56JY1"/>
<dbReference type="OMA" id="YRTNKHH"/>
<dbReference type="OrthoDB" id="10254713at2759"/>
<dbReference type="TreeFam" id="TF300104"/>
<dbReference type="Reactome" id="R-BTA-156827">
    <property type="pathway name" value="L13a-mediated translational silencing of Ceruloplasmin expression"/>
</dbReference>
<dbReference type="Reactome" id="R-BTA-1799339">
    <property type="pathway name" value="SRP-dependent cotranslational protein targeting to membrane"/>
</dbReference>
<dbReference type="Reactome" id="R-BTA-6791226">
    <property type="pathway name" value="Major pathway of rRNA processing in the nucleolus and cytosol"/>
</dbReference>
<dbReference type="Reactome" id="R-BTA-72689">
    <property type="pathway name" value="Formation of a pool of free 40S subunits"/>
</dbReference>
<dbReference type="Reactome" id="R-BTA-72706">
    <property type="pathway name" value="GTP hydrolysis and joining of the 60S ribosomal subunit"/>
</dbReference>
<dbReference type="Reactome" id="R-BTA-975956">
    <property type="pathway name" value="Nonsense Mediated Decay (NMD) independent of the Exon Junction Complex (EJC)"/>
</dbReference>
<dbReference type="Reactome" id="R-BTA-975957">
    <property type="pathway name" value="Nonsense Mediated Decay (NMD) enhanced by the Exon Junction Complex (EJC)"/>
</dbReference>
<dbReference type="Proteomes" id="UP000009136">
    <property type="component" value="Chromosome 1"/>
</dbReference>
<dbReference type="Bgee" id="ENSBTAG00000014208">
    <property type="expression patterns" value="Expressed in pharyngeal tonsil and 104 other cell types or tissues"/>
</dbReference>
<dbReference type="GO" id="GO:0022625">
    <property type="term" value="C:cytosolic large ribosomal subunit"/>
    <property type="evidence" value="ECO:0000318"/>
    <property type="project" value="GO_Central"/>
</dbReference>
<dbReference type="GO" id="GO:0003735">
    <property type="term" value="F:structural constituent of ribosome"/>
    <property type="evidence" value="ECO:0000318"/>
    <property type="project" value="GO_Central"/>
</dbReference>
<dbReference type="GO" id="GO:0000049">
    <property type="term" value="F:tRNA binding"/>
    <property type="evidence" value="ECO:0007669"/>
    <property type="project" value="UniProtKB-KW"/>
</dbReference>
<dbReference type="GO" id="GO:0002181">
    <property type="term" value="P:cytoplasmic translation"/>
    <property type="evidence" value="ECO:0000318"/>
    <property type="project" value="GO_Central"/>
</dbReference>
<dbReference type="GO" id="GO:0042273">
    <property type="term" value="P:ribosomal large subunit biogenesis"/>
    <property type="evidence" value="ECO:0000318"/>
    <property type="project" value="GO_Central"/>
</dbReference>
<dbReference type="FunFam" id="2.40.10.190:FF:000005">
    <property type="entry name" value="60S ribosomal protein L35a"/>
    <property type="match status" value="1"/>
</dbReference>
<dbReference type="Gene3D" id="2.40.10.190">
    <property type="entry name" value="translation elongation factor selb, chain A, domain 4"/>
    <property type="match status" value="1"/>
</dbReference>
<dbReference type="HAMAP" id="MF_00573">
    <property type="entry name" value="Ribosomal_eL33"/>
    <property type="match status" value="1"/>
</dbReference>
<dbReference type="InterPro" id="IPR001780">
    <property type="entry name" value="Ribosomal_eL33"/>
</dbReference>
<dbReference type="InterPro" id="IPR018266">
    <property type="entry name" value="Ribosomal_eL33_CS"/>
</dbReference>
<dbReference type="InterPro" id="IPR038661">
    <property type="entry name" value="Ribosomal_eL33_sf"/>
</dbReference>
<dbReference type="InterPro" id="IPR009000">
    <property type="entry name" value="Transl_B-barrel_sf"/>
</dbReference>
<dbReference type="PANTHER" id="PTHR10902">
    <property type="entry name" value="60S RIBOSOMAL PROTEIN L35A"/>
    <property type="match status" value="1"/>
</dbReference>
<dbReference type="Pfam" id="PF01247">
    <property type="entry name" value="Ribosomal_L35Ae"/>
    <property type="match status" value="1"/>
</dbReference>
<dbReference type="SUPFAM" id="SSF50447">
    <property type="entry name" value="Translation proteins"/>
    <property type="match status" value="1"/>
</dbReference>
<dbReference type="PROSITE" id="PS01105">
    <property type="entry name" value="RIBOSOMAL_L35AE"/>
    <property type="match status" value="1"/>
</dbReference>
<accession>Q56JY1</accession>
<proteinExistence type="inferred from homology"/>
<name>RL35A_BOVIN</name>
<comment type="function">
    <text evidence="2">Component of the large ribosomal subunit. The ribosome is a large ribonucleoprotein complex responsible for the synthesis of proteins in the cell. Required for the proliferation and viability of hematopoietic cells.</text>
</comment>
<comment type="subunit">
    <text evidence="2">Component of the large ribosomal subunit.</text>
</comment>
<comment type="subcellular location">
    <subcellularLocation>
        <location evidence="2">Cytoplasm</location>
    </subcellularLocation>
</comment>
<comment type="similarity">
    <text evidence="3">Belongs to the eukaryotic ribosomal protein eL33 family.</text>
</comment>
<gene>
    <name type="primary">RPL35A</name>
</gene>